<organism>
    <name type="scientific">Homo sapiens</name>
    <name type="common">Human</name>
    <dbReference type="NCBI Taxonomy" id="9606"/>
    <lineage>
        <taxon>Eukaryota</taxon>
        <taxon>Metazoa</taxon>
        <taxon>Chordata</taxon>
        <taxon>Craniata</taxon>
        <taxon>Vertebrata</taxon>
        <taxon>Euteleostomi</taxon>
        <taxon>Mammalia</taxon>
        <taxon>Eutheria</taxon>
        <taxon>Euarchontoglires</taxon>
        <taxon>Primates</taxon>
        <taxon>Haplorrhini</taxon>
        <taxon>Catarrhini</taxon>
        <taxon>Hominidae</taxon>
        <taxon>Homo</taxon>
    </lineage>
</organism>
<sequence>MVNSCCGSVCSDQGCGLENCCRPSCCQTTCCRTTCCRPSCCVSSCCRPQCCQSVCCQPTCCSPSCCQTTCCRTTCCRPSCCVSSCFRPQCCQSVYCQPTCCRPSCGQTTCCRTTCYRPSCCVSTCCRPTCSSGSCC</sequence>
<dbReference type="EMBL" id="AJ406934">
    <property type="protein sequence ID" value="CAC27573.1"/>
    <property type="molecule type" value="mRNA"/>
</dbReference>
<dbReference type="EMBL" id="AC006070">
    <property type="status" value="NOT_ANNOTATED_CDS"/>
    <property type="molecule type" value="Genomic_DNA"/>
</dbReference>
<dbReference type="EMBL" id="BC127252">
    <property type="protein sequence ID" value="AAI27253.1"/>
    <property type="molecule type" value="mRNA"/>
</dbReference>
<dbReference type="CCDS" id="CCDS11384.1"/>
<dbReference type="RefSeq" id="NP_149051.2">
    <property type="nucleotide sequence ID" value="NM_033062.4"/>
</dbReference>
<dbReference type="BioGRID" id="124455">
    <property type="interactions" value="132"/>
</dbReference>
<dbReference type="FunCoup" id="Q9BYR5">
    <property type="interactions" value="79"/>
</dbReference>
<dbReference type="IntAct" id="Q9BYR5">
    <property type="interactions" value="121"/>
</dbReference>
<dbReference type="BioMuta" id="KRTAP4-2"/>
<dbReference type="DMDM" id="296434557"/>
<dbReference type="MassIVE" id="Q9BYR5"/>
<dbReference type="PeptideAtlas" id="Q9BYR5"/>
<dbReference type="ProteomicsDB" id="79694"/>
<dbReference type="Antibodypedia" id="81659">
    <property type="antibodies" value="1 antibodies from 1 providers"/>
</dbReference>
<dbReference type="DNASU" id="85291"/>
<dbReference type="Ensembl" id="ENST00000377726.3">
    <property type="protein sequence ID" value="ENSP00000366955.2"/>
    <property type="gene ID" value="ENSG00000244537.3"/>
</dbReference>
<dbReference type="GeneID" id="85291"/>
<dbReference type="KEGG" id="hsa:85291"/>
<dbReference type="MANE-Select" id="ENST00000377726.3">
    <property type="protein sequence ID" value="ENSP00000366955.2"/>
    <property type="RefSeq nucleotide sequence ID" value="NM_033062.4"/>
    <property type="RefSeq protein sequence ID" value="NP_149051.2"/>
</dbReference>
<dbReference type="UCSC" id="uc002hwd.3">
    <property type="organism name" value="human"/>
</dbReference>
<dbReference type="AGR" id="HGNC:18900"/>
<dbReference type="CTD" id="85291"/>
<dbReference type="GeneCards" id="KRTAP4-2"/>
<dbReference type="HGNC" id="HGNC:18900">
    <property type="gene designation" value="KRTAP4-2"/>
</dbReference>
<dbReference type="HPA" id="ENSG00000244537">
    <property type="expression patterns" value="Tissue enriched (skin)"/>
</dbReference>
<dbReference type="neXtProt" id="NX_Q9BYR5"/>
<dbReference type="OpenTargets" id="ENSG00000244537"/>
<dbReference type="PharmGKB" id="PA38749"/>
<dbReference type="VEuPathDB" id="HostDB:ENSG00000244537"/>
<dbReference type="eggNOG" id="KOG4726">
    <property type="taxonomic scope" value="Eukaryota"/>
</dbReference>
<dbReference type="GeneTree" id="ENSGT00940000164350"/>
<dbReference type="HOGENOM" id="CLU_113141_2_0_1"/>
<dbReference type="InParanoid" id="Q9BYR5"/>
<dbReference type="OMA" id="SMGCRSM"/>
<dbReference type="OrthoDB" id="9539538at2759"/>
<dbReference type="PAN-GO" id="Q9BYR5">
    <property type="GO annotations" value="0 GO annotations based on evolutionary models"/>
</dbReference>
<dbReference type="PhylomeDB" id="Q9BYR5"/>
<dbReference type="TreeFam" id="TF351356"/>
<dbReference type="PathwayCommons" id="Q9BYR5"/>
<dbReference type="Reactome" id="R-HSA-6805567">
    <property type="pathway name" value="Keratinization"/>
</dbReference>
<dbReference type="SignaLink" id="Q9BYR5"/>
<dbReference type="BioGRID-ORCS" id="85291">
    <property type="hits" value="514 hits in 1052 CRISPR screens"/>
</dbReference>
<dbReference type="GenomeRNAi" id="85291"/>
<dbReference type="Pharos" id="Q9BYR5">
    <property type="development level" value="Tdark"/>
</dbReference>
<dbReference type="PRO" id="PR:Q9BYR5"/>
<dbReference type="Proteomes" id="UP000005640">
    <property type="component" value="Chromosome 17"/>
</dbReference>
<dbReference type="RNAct" id="Q9BYR5">
    <property type="molecule type" value="protein"/>
</dbReference>
<dbReference type="Bgee" id="ENSG00000244537">
    <property type="expression patterns" value="Expressed in tibialis anterior and 21 other cell types or tissues"/>
</dbReference>
<dbReference type="GO" id="GO:0005829">
    <property type="term" value="C:cytosol"/>
    <property type="evidence" value="ECO:0000304"/>
    <property type="project" value="Reactome"/>
</dbReference>
<dbReference type="GO" id="GO:0045095">
    <property type="term" value="C:keratin filament"/>
    <property type="evidence" value="ECO:0007669"/>
    <property type="project" value="InterPro"/>
</dbReference>
<dbReference type="GO" id="GO:0042802">
    <property type="term" value="F:identical protein binding"/>
    <property type="evidence" value="ECO:0000353"/>
    <property type="project" value="IntAct"/>
</dbReference>
<dbReference type="InterPro" id="IPR002494">
    <property type="entry name" value="KAP"/>
</dbReference>
<dbReference type="PANTHER" id="PTHR23262">
    <property type="entry name" value="KERATIN ASSOCIATED PROTEIN"/>
    <property type="match status" value="1"/>
</dbReference>
<dbReference type="PANTHER" id="PTHR23262:SF248">
    <property type="entry name" value="KERATIN-ASSOCIATED PROTEIN 4-6"/>
    <property type="match status" value="1"/>
</dbReference>
<dbReference type="Pfam" id="PF13885">
    <property type="entry name" value="Keratin_B2_2"/>
    <property type="match status" value="2"/>
</dbReference>
<feature type="chain" id="PRO_0000185170" description="Keratin-associated protein 4-2">
    <location>
        <begin position="1"/>
        <end position="136"/>
    </location>
</feature>
<feature type="repeat" description="1">
    <location>
        <begin position="5"/>
        <end position="9"/>
    </location>
</feature>
<feature type="repeat" description="2">
    <location>
        <begin position="20"/>
        <end position="24"/>
    </location>
</feature>
<feature type="repeat" description="3">
    <location>
        <begin position="25"/>
        <end position="29"/>
    </location>
</feature>
<feature type="repeat" description="4">
    <location>
        <begin position="30"/>
        <end position="34"/>
    </location>
</feature>
<feature type="repeat" description="5">
    <location>
        <begin position="35"/>
        <end position="39"/>
    </location>
</feature>
<feature type="repeat" description="6">
    <location>
        <begin position="40"/>
        <end position="44"/>
    </location>
</feature>
<feature type="repeat" description="7">
    <location>
        <begin position="45"/>
        <end position="49"/>
    </location>
</feature>
<feature type="repeat" description="8">
    <location>
        <begin position="50"/>
        <end position="54"/>
    </location>
</feature>
<feature type="repeat" description="9">
    <location>
        <begin position="55"/>
        <end position="59"/>
    </location>
</feature>
<feature type="repeat" description="10">
    <location>
        <begin position="60"/>
        <end position="64"/>
    </location>
</feature>
<feature type="repeat" description="11">
    <location>
        <begin position="65"/>
        <end position="69"/>
    </location>
</feature>
<feature type="repeat" description="12">
    <location>
        <begin position="70"/>
        <end position="74"/>
    </location>
</feature>
<feature type="repeat" description="13">
    <location>
        <begin position="75"/>
        <end position="79"/>
    </location>
</feature>
<feature type="repeat" description="14">
    <location>
        <begin position="80"/>
        <end position="84"/>
    </location>
</feature>
<feature type="repeat" description="15">
    <location>
        <begin position="90"/>
        <end position="94"/>
    </location>
</feature>
<feature type="repeat" description="16">
    <location>
        <begin position="95"/>
        <end position="99"/>
    </location>
</feature>
<feature type="repeat" description="17">
    <location>
        <begin position="100"/>
        <end position="104"/>
    </location>
</feature>
<feature type="repeat" description="18">
    <location>
        <begin position="110"/>
        <end position="114"/>
    </location>
</feature>
<feature type="repeat" description="19">
    <location>
        <begin position="120"/>
        <end position="124"/>
    </location>
</feature>
<feature type="repeat" description="20">
    <location>
        <begin position="125"/>
        <end position="129"/>
    </location>
</feature>
<feature type="region of interest" description="20 X 5 AA repeats OF C-C-[GRQVS]-[SPT]-[VSTQ]">
    <location>
        <begin position="5"/>
        <end position="129"/>
    </location>
</feature>
<feature type="sequence variant" id="VAR_060241" description="In dbSNP:rs389784." evidence="1 2">
    <original>Y</original>
    <variation>C</variation>
    <location>
        <position position="95"/>
    </location>
</feature>
<reference key="1">
    <citation type="journal article" date="2001" name="J. Biol. Chem.">
        <title>Characterization of a cluster of human high/ultrahigh sulfur keratin-associated protein genes embedded in the type I keratin gene domain on chromosome 17q12-21.</title>
        <authorList>
            <person name="Rogers M.A."/>
            <person name="Langbein L."/>
            <person name="Winter H."/>
            <person name="Ehmann C."/>
            <person name="Praetzel S."/>
            <person name="Korn B."/>
            <person name="Schweizer J."/>
        </authorList>
    </citation>
    <scope>NUCLEOTIDE SEQUENCE [MRNA]</scope>
    <scope>VARIANT CYS-95</scope>
    <source>
        <tissue>Scalp</tissue>
    </source>
</reference>
<reference key="2">
    <citation type="journal article" date="2006" name="Nature">
        <title>DNA sequence of human chromosome 17 and analysis of rearrangement in the human lineage.</title>
        <authorList>
            <person name="Zody M.C."/>
            <person name="Garber M."/>
            <person name="Adams D.J."/>
            <person name="Sharpe T."/>
            <person name="Harrow J."/>
            <person name="Lupski J.R."/>
            <person name="Nicholson C."/>
            <person name="Searle S.M."/>
            <person name="Wilming L."/>
            <person name="Young S.K."/>
            <person name="Abouelleil A."/>
            <person name="Allen N.R."/>
            <person name="Bi W."/>
            <person name="Bloom T."/>
            <person name="Borowsky M.L."/>
            <person name="Bugalter B.E."/>
            <person name="Butler J."/>
            <person name="Chang J.L."/>
            <person name="Chen C.-K."/>
            <person name="Cook A."/>
            <person name="Corum B."/>
            <person name="Cuomo C.A."/>
            <person name="de Jong P.J."/>
            <person name="DeCaprio D."/>
            <person name="Dewar K."/>
            <person name="FitzGerald M."/>
            <person name="Gilbert J."/>
            <person name="Gibson R."/>
            <person name="Gnerre S."/>
            <person name="Goldstein S."/>
            <person name="Grafham D.V."/>
            <person name="Grocock R."/>
            <person name="Hafez N."/>
            <person name="Hagopian D.S."/>
            <person name="Hart E."/>
            <person name="Norman C.H."/>
            <person name="Humphray S."/>
            <person name="Jaffe D.B."/>
            <person name="Jones M."/>
            <person name="Kamal M."/>
            <person name="Khodiyar V.K."/>
            <person name="LaButti K."/>
            <person name="Laird G."/>
            <person name="Lehoczky J."/>
            <person name="Liu X."/>
            <person name="Lokyitsang T."/>
            <person name="Loveland J."/>
            <person name="Lui A."/>
            <person name="Macdonald P."/>
            <person name="Major J.E."/>
            <person name="Matthews L."/>
            <person name="Mauceli E."/>
            <person name="McCarroll S.A."/>
            <person name="Mihalev A.H."/>
            <person name="Mudge J."/>
            <person name="Nguyen C."/>
            <person name="Nicol R."/>
            <person name="O'Leary S.B."/>
            <person name="Osoegawa K."/>
            <person name="Schwartz D.C."/>
            <person name="Shaw-Smith C."/>
            <person name="Stankiewicz P."/>
            <person name="Steward C."/>
            <person name="Swarbreck D."/>
            <person name="Venkataraman V."/>
            <person name="Whittaker C.A."/>
            <person name="Yang X."/>
            <person name="Zimmer A.R."/>
            <person name="Bradley A."/>
            <person name="Hubbard T."/>
            <person name="Birren B.W."/>
            <person name="Rogers J."/>
            <person name="Lander E.S."/>
            <person name="Nusbaum C."/>
        </authorList>
    </citation>
    <scope>NUCLEOTIDE SEQUENCE [LARGE SCALE GENOMIC DNA]</scope>
</reference>
<reference key="3">
    <citation type="journal article" date="2004" name="Genome Res.">
        <title>The status, quality, and expansion of the NIH full-length cDNA project: the Mammalian Gene Collection (MGC).</title>
        <authorList>
            <consortium name="The MGC Project Team"/>
        </authorList>
    </citation>
    <scope>NUCLEOTIDE SEQUENCE [LARGE SCALE MRNA]</scope>
    <scope>VARIANT CYS-95</scope>
</reference>
<evidence type="ECO:0000269" key="1">
    <source>
    </source>
</evidence>
<evidence type="ECO:0000269" key="2">
    <source>
    </source>
</evidence>
<evidence type="ECO:0000305" key="3"/>
<name>KRA42_HUMAN</name>
<gene>
    <name type="primary">KRTAP4-2</name>
    <name type="synonym">KAP4.2</name>
    <name type="synonym">KRTAP4.2</name>
</gene>
<comment type="function">
    <text>In the hair cortex, hair keratin intermediate filaments are embedded in an interfilamentous matrix, consisting of hair keratin-associated proteins (KRTAP), which are essential for the formation of a rigid and resistant hair shaft through their extensive disulfide bond cross-linking with abundant cysteine residues of hair keratins. The matrix proteins include the high-sulfur and high-glycine-tyrosine keratins.</text>
</comment>
<comment type="subunit">
    <text>Interacts with hair keratins.</text>
</comment>
<comment type="interaction">
    <interactant intactId="EBI-10172511">
        <id>Q9BYR5</id>
    </interactant>
    <interactant intactId="EBI-10173507">
        <id>Q6UY14-3</id>
        <label>ADAMTSL4</label>
    </interactant>
    <organismsDiffer>false</organismsDiffer>
    <experiments>6</experiments>
</comment>
<comment type="interaction">
    <interactant intactId="EBI-10172511">
        <id>Q9BYR5</id>
    </interactant>
    <interactant intactId="EBI-10187270">
        <id>Q9Y2J4-4</id>
        <label>AMOTL2</label>
    </interactant>
    <organismsDiffer>false</organismsDiffer>
    <experiments>3</experiments>
</comment>
<comment type="interaction">
    <interactant intactId="EBI-10172511">
        <id>Q9BYR5</id>
    </interactant>
    <interactant intactId="EBI-11954519">
        <id>Q49AR9</id>
        <label>ANKS1A</label>
    </interactant>
    <organismsDiffer>false</organismsDiffer>
    <experiments>3</experiments>
</comment>
<comment type="interaction">
    <interactant intactId="EBI-10172511">
        <id>Q9BYR5</id>
    </interactant>
    <interactant intactId="EBI-745213">
        <id>P29972</id>
        <label>AQP1</label>
    </interactant>
    <organismsDiffer>false</organismsDiffer>
    <experiments>6</experiments>
</comment>
<comment type="interaction">
    <interactant intactId="EBI-10172511">
        <id>Q9BYR5</id>
    </interactant>
    <interactant intactId="EBI-727146">
        <id>Q7Z3C6</id>
        <label>ATG9A</label>
    </interactant>
    <organismsDiffer>false</organismsDiffer>
    <experiments>3</experiments>
</comment>
<comment type="interaction">
    <interactant intactId="EBI-10172511">
        <id>Q9BYR5</id>
    </interactant>
    <interactant intactId="EBI-8640233">
        <id>Q5T686</id>
        <label>AVPI1</label>
    </interactant>
    <organismsDiffer>false</organismsDiffer>
    <experiments>3</experiments>
</comment>
<comment type="interaction">
    <interactant intactId="EBI-10172511">
        <id>Q9BYR5</id>
    </interactant>
    <interactant intactId="EBI-16429430">
        <id>A0A0S2Z4M1</id>
        <label>AXIN1</label>
    </interactant>
    <organismsDiffer>false</organismsDiffer>
    <experiments>3</experiments>
</comment>
<comment type="interaction">
    <interactant intactId="EBI-10172511">
        <id>Q9BYR5</id>
    </interactant>
    <interactant intactId="EBI-710484">
        <id>O15169</id>
        <label>AXIN1</label>
    </interactant>
    <organismsDiffer>false</organismsDiffer>
    <experiments>3</experiments>
</comment>
<comment type="interaction">
    <interactant intactId="EBI-10172511">
        <id>Q9BYR5</id>
    </interactant>
    <interactant intactId="EBI-2949658">
        <id>O95429</id>
        <label>BAG4</label>
    </interactant>
    <organismsDiffer>false</organismsDiffer>
    <experiments>3</experiments>
</comment>
<comment type="interaction">
    <interactant intactId="EBI-10172511">
        <id>Q9BYR5</id>
    </interactant>
    <interactant intactId="EBI-358049">
        <id>Q13895</id>
        <label>BYSL</label>
    </interactant>
    <organismsDiffer>false</organismsDiffer>
    <experiments>3</experiments>
</comment>
<comment type="interaction">
    <interactant intactId="EBI-10172511">
        <id>Q9BYR5</id>
    </interactant>
    <interactant intactId="EBI-744545">
        <id>Q8NEC5</id>
        <label>CATSPER1</label>
    </interactant>
    <organismsDiffer>false</organismsDiffer>
    <experiments>3</experiments>
</comment>
<comment type="interaction">
    <interactant intactId="EBI-10172511">
        <id>Q9BYR5</id>
    </interactant>
    <interactant intactId="EBI-746041">
        <id>Q8TC90</id>
        <label>CCER1</label>
    </interactant>
    <organismsDiffer>false</organismsDiffer>
    <experiments>3</experiments>
</comment>
<comment type="interaction">
    <interactant intactId="EBI-10172511">
        <id>Q9BYR5</id>
    </interactant>
    <interactant intactId="EBI-12139335">
        <id>Q8N6W0</id>
        <label>CELF5</label>
    </interactant>
    <organismsDiffer>false</organismsDiffer>
    <experiments>3</experiments>
</comment>
<comment type="interaction">
    <interactant intactId="EBI-10172511">
        <id>Q9BYR5</id>
    </interactant>
    <interactant intactId="EBI-741528">
        <id>Q9UKJ5</id>
        <label>CHIC2</label>
    </interactant>
    <organismsDiffer>false</organismsDiffer>
    <experiments>3</experiments>
</comment>
<comment type="interaction">
    <interactant intactId="EBI-10172511">
        <id>Q9BYR5</id>
    </interactant>
    <interactant intactId="EBI-947551">
        <id>Q9H2X0</id>
        <label>CHRD</label>
    </interactant>
    <organismsDiffer>false</organismsDiffer>
    <experiments>6</experiments>
</comment>
<comment type="interaction">
    <interactant intactId="EBI-10172511">
        <id>Q9BYR5</id>
    </interactant>
    <interactant intactId="EBI-713677">
        <id>Q9UGL9</id>
        <label>CRCT1</label>
    </interactant>
    <organismsDiffer>false</organismsDiffer>
    <experiments>7</experiments>
</comment>
<comment type="interaction">
    <interactant intactId="EBI-10172511">
        <id>Q9BYR5</id>
    </interactant>
    <interactant intactId="EBI-10192698">
        <id>Q02930-3</id>
        <label>CREB5</label>
    </interactant>
    <organismsDiffer>false</organismsDiffer>
    <experiments>9</experiments>
</comment>
<comment type="interaction">
    <interactant intactId="EBI-10172511">
        <id>Q9BYR5</id>
    </interactant>
    <interactant intactId="EBI-2212355">
        <id>Q49AN0</id>
        <label>CRY2</label>
    </interactant>
    <organismsDiffer>false</organismsDiffer>
    <experiments>3</experiments>
</comment>
<comment type="interaction">
    <interactant intactId="EBI-10172511">
        <id>Q9BYR5</id>
    </interactant>
    <interactant intactId="EBI-14156412">
        <id>Q08AG9</id>
        <label>CYP21A2</label>
    </interactant>
    <organismsDiffer>false</organismsDiffer>
    <experiments>3</experiments>
</comment>
<comment type="interaction">
    <interactant intactId="EBI-10172511">
        <id>Q9BYR5</id>
    </interactant>
    <interactant intactId="EBI-3867333">
        <id>A8MQ03</id>
        <label>CYSRT1</label>
    </interactant>
    <organismsDiffer>false</organismsDiffer>
    <experiments>3</experiments>
</comment>
<comment type="interaction">
    <interactant intactId="EBI-10172511">
        <id>Q9BYR5</id>
    </interactant>
    <interactant intactId="EBI-1753397">
        <id>Q9P1A6</id>
        <label>DLGAP2</label>
    </interactant>
    <organismsDiffer>false</organismsDiffer>
    <experiments>3</experiments>
</comment>
<comment type="interaction">
    <interactant intactId="EBI-10172511">
        <id>Q9BYR5</id>
    </interactant>
    <interactant intactId="EBI-448771">
        <id>Q92608</id>
        <label>DOCK2</label>
    </interactant>
    <organismsDiffer>false</organismsDiffer>
    <experiments>3</experiments>
</comment>
<comment type="interaction">
    <interactant intactId="EBI-10172511">
        <id>Q9BYR5</id>
    </interactant>
    <interactant intactId="EBI-374781">
        <id>O76003</id>
        <label>GLRX3</label>
    </interactant>
    <organismsDiffer>false</organismsDiffer>
    <experiments>3</experiments>
</comment>
<comment type="interaction">
    <interactant intactId="EBI-10172511">
        <id>Q9BYR5</id>
    </interactant>
    <interactant intactId="EBI-11978177">
        <id>Q96NT3-2</id>
        <label>GUCD1</label>
    </interactant>
    <organismsDiffer>false</organismsDiffer>
    <experiments>3</experiments>
</comment>
<comment type="interaction">
    <interactant intactId="EBI-10172511">
        <id>Q9BYR5</id>
    </interactant>
    <interactant intactId="EBI-10180762">
        <id>V9HW60</id>
        <label>HEL-S-182mP</label>
    </interactant>
    <organismsDiffer>false</organismsDiffer>
    <experiments>3</experiments>
</comment>
<comment type="interaction">
    <interactant intactId="EBI-10172511">
        <id>Q9BYR5</id>
    </interactant>
    <interactant intactId="EBI-740785">
        <id>P49639</id>
        <label>HOXA1</label>
    </interactant>
    <organismsDiffer>false</organismsDiffer>
    <experiments>10</experiments>
</comment>
<comment type="interaction">
    <interactant intactId="EBI-10172511">
        <id>Q9BYR5</id>
    </interactant>
    <interactant intactId="EBI-745290">
        <id>P17482</id>
        <label>HOXB9</label>
    </interactant>
    <organismsDiffer>false</organismsDiffer>
    <experiments>3</experiments>
</comment>
<comment type="interaction">
    <interactant intactId="EBI-10172511">
        <id>Q9BYR5</id>
    </interactant>
    <interactant intactId="EBI-749311">
        <id>P37235</id>
        <label>HPCAL1</label>
    </interactant>
    <organismsDiffer>false</organismsDiffer>
    <experiments>3</experiments>
</comment>
<comment type="interaction">
    <interactant intactId="EBI-10172511">
        <id>Q9BYR5</id>
    </interactant>
    <interactant intactId="EBI-3918847">
        <id>Q9H2F3</id>
        <label>HSD3B7</label>
    </interactant>
    <organismsDiffer>false</organismsDiffer>
    <experiments>3</experiments>
</comment>
<comment type="interaction">
    <interactant intactId="EBI-10172511">
        <id>Q9BYR5</id>
    </interactant>
    <interactant intactId="EBI-11051601">
        <id>P16144-2</id>
        <label>ITGB4</label>
    </interactant>
    <organismsDiffer>false</organismsDiffer>
    <experiments>3</experiments>
</comment>
<comment type="interaction">
    <interactant intactId="EBI-10172511">
        <id>Q9BYR5</id>
    </interactant>
    <interactant intactId="EBI-10981970">
        <id>Q5T749</id>
        <label>KPRP</label>
    </interactant>
    <organismsDiffer>false</organismsDiffer>
    <experiments>3</experiments>
</comment>
<comment type="interaction">
    <interactant intactId="EBI-10172511">
        <id>Q9BYR5</id>
    </interactant>
    <interactant intactId="EBI-11749135">
        <id>Q8IUG1</id>
        <label>KRTAP1-3</label>
    </interactant>
    <organismsDiffer>false</organismsDiffer>
    <experiments>3</experiments>
</comment>
<comment type="interaction">
    <interactant intactId="EBI-10172511">
        <id>Q9BYR5</id>
    </interactant>
    <interactant intactId="EBI-11741292">
        <id>Q9BYS1</id>
        <label>KRTAP1-5</label>
    </interactant>
    <organismsDiffer>false</organismsDiffer>
    <experiments>3</experiments>
</comment>
<comment type="interaction">
    <interactant intactId="EBI-10172511">
        <id>Q9BYR5</id>
    </interactant>
    <interactant intactId="EBI-10217483">
        <id>P60412</id>
        <label>KRTAP10-11</label>
    </interactant>
    <organismsDiffer>false</organismsDiffer>
    <experiments>3</experiments>
</comment>
<comment type="interaction">
    <interactant intactId="EBI-10172511">
        <id>Q9BYR5</id>
    </interactant>
    <interactant intactId="EBI-10172150">
        <id>P60370</id>
        <label>KRTAP10-5</label>
    </interactant>
    <organismsDiffer>false</organismsDiffer>
    <experiments>8</experiments>
</comment>
<comment type="interaction">
    <interactant intactId="EBI-10172511">
        <id>Q9BYR5</id>
    </interactant>
    <interactant intactId="EBI-12012928">
        <id>P60371</id>
        <label>KRTAP10-6</label>
    </interactant>
    <organismsDiffer>false</organismsDiffer>
    <experiments>3</experiments>
</comment>
<comment type="interaction">
    <interactant intactId="EBI-10172511">
        <id>Q9BYR5</id>
    </interactant>
    <interactant intactId="EBI-10172290">
        <id>P60409</id>
        <label>KRTAP10-7</label>
    </interactant>
    <organismsDiffer>false</organismsDiffer>
    <experiments>3</experiments>
</comment>
<comment type="interaction">
    <interactant intactId="EBI-10172511">
        <id>Q9BYR5</id>
    </interactant>
    <interactant intactId="EBI-10171774">
        <id>P60410</id>
        <label>KRTAP10-8</label>
    </interactant>
    <organismsDiffer>false</organismsDiffer>
    <experiments>10</experiments>
</comment>
<comment type="interaction">
    <interactant intactId="EBI-10172511">
        <id>Q9BYR5</id>
    </interactant>
    <interactant intactId="EBI-10172052">
        <id>P60411</id>
        <label>KRTAP10-9</label>
    </interactant>
    <organismsDiffer>false</organismsDiffer>
    <experiments>5</experiments>
</comment>
<comment type="interaction">
    <interactant intactId="EBI-10172511">
        <id>Q9BYR5</id>
    </interactant>
    <interactant intactId="EBI-1052037">
        <id>Q8IUC1</id>
        <label>KRTAP11-1</label>
    </interactant>
    <organismsDiffer>false</organismsDiffer>
    <experiments>3</experiments>
</comment>
<comment type="interaction">
    <interactant intactId="EBI-10172511">
        <id>Q9BYR5</id>
    </interactant>
    <interactant intactId="EBI-10176379">
        <id>P59991</id>
        <label>KRTAP12-2</label>
    </interactant>
    <organismsDiffer>false</organismsDiffer>
    <experiments>3</experiments>
</comment>
<comment type="interaction">
    <interactant intactId="EBI-10172511">
        <id>Q9BYR5</id>
    </interactant>
    <interactant intactId="EBI-11953334">
        <id>P60328</id>
        <label>KRTAP12-3</label>
    </interactant>
    <organismsDiffer>false</organismsDiffer>
    <experiments>3</experiments>
</comment>
<comment type="interaction">
    <interactant intactId="EBI-10172511">
        <id>Q9BYR5</id>
    </interactant>
    <interactant intactId="EBI-3957672">
        <id>Q6PEX3</id>
        <label>KRTAP26-1</label>
    </interactant>
    <organismsDiffer>false</organismsDiffer>
    <experiments>6</experiments>
</comment>
<comment type="interaction">
    <interactant intactId="EBI-10172511">
        <id>Q9BYR5</id>
    </interactant>
    <interactant intactId="EBI-3957694">
        <id>Q9BYR6</id>
        <label>KRTAP3-3</label>
    </interactant>
    <organismsDiffer>false</organismsDiffer>
    <experiments>3</experiments>
</comment>
<comment type="interaction">
    <interactant intactId="EBI-10172511">
        <id>Q9BYR5</id>
    </interactant>
    <interactant intactId="EBI-10172511">
        <id>Q9BYR5</id>
        <label>KRTAP4-2</label>
    </interactant>
    <organismsDiffer>false</organismsDiffer>
    <experiments>3</experiments>
</comment>
<comment type="interaction">
    <interactant intactId="EBI-10172511">
        <id>Q9BYR5</id>
    </interactant>
    <interactant intactId="EBI-11958132">
        <id>Q9BYR3</id>
        <label>KRTAP4-4</label>
    </interactant>
    <organismsDiffer>false</organismsDiffer>
    <experiments>3</experiments>
</comment>
<comment type="interaction">
    <interactant intactId="EBI-10172511">
        <id>Q9BYR5</id>
    </interactant>
    <interactant intactId="EBI-11993254">
        <id>Q9BYR2</id>
        <label>KRTAP4-5</label>
    </interactant>
    <organismsDiffer>false</organismsDiffer>
    <experiments>3</experiments>
</comment>
<comment type="interaction">
    <interactant intactId="EBI-10172511">
        <id>Q9BYR5</id>
    </interactant>
    <interactant intactId="EBI-11958178">
        <id>Q701N4</id>
        <label>KRTAP5-2</label>
    </interactant>
    <organismsDiffer>false</organismsDiffer>
    <experiments>3</experiments>
</comment>
<comment type="interaction">
    <interactant intactId="EBI-10172511">
        <id>Q9BYR5</id>
    </interactant>
    <interactant intactId="EBI-11974251">
        <id>Q6L8H2</id>
        <label>KRTAP5-3</label>
    </interactant>
    <organismsDiffer>false</organismsDiffer>
    <experiments>3</experiments>
</comment>
<comment type="interaction">
    <interactant intactId="EBI-10172511">
        <id>Q9BYR5</id>
    </interactant>
    <interactant intactId="EBI-10250562">
        <id>Q6L8G9</id>
        <label>KRTAP5-6</label>
    </interactant>
    <organismsDiffer>false</organismsDiffer>
    <experiments>8</experiments>
</comment>
<comment type="interaction">
    <interactant intactId="EBI-10172511">
        <id>Q9BYR5</id>
    </interactant>
    <interactant intactId="EBI-11987425">
        <id>Q6L8G8</id>
        <label>KRTAP5-7</label>
    </interactant>
    <organismsDiffer>false</organismsDiffer>
    <experiments>4</experiments>
</comment>
<comment type="interaction">
    <interactant intactId="EBI-10172511">
        <id>Q9BYR5</id>
    </interactant>
    <interactant intactId="EBI-3958099">
        <id>P26371</id>
        <label>KRTAP5-9</label>
    </interactant>
    <organismsDiffer>false</organismsDiffer>
    <experiments>8</experiments>
</comment>
<comment type="interaction">
    <interactant intactId="EBI-10172511">
        <id>Q9BYR5</id>
    </interactant>
    <interactant intactId="EBI-1044640">
        <id>Q9BYQ4</id>
        <label>KRTAP9-2</label>
    </interactant>
    <organismsDiffer>false</organismsDiffer>
    <experiments>8</experiments>
</comment>
<comment type="interaction">
    <interactant intactId="EBI-10172511">
        <id>Q9BYR5</id>
    </interactant>
    <interactant intactId="EBI-1043191">
        <id>Q9BYQ3</id>
        <label>KRTAP9-3</label>
    </interactant>
    <organismsDiffer>false</organismsDiffer>
    <experiments>6</experiments>
</comment>
<comment type="interaction">
    <interactant intactId="EBI-10172511">
        <id>Q9BYR5</id>
    </interactant>
    <interactant intactId="EBI-10185730">
        <id>Q9BYQ2</id>
        <label>KRTAP9-4</label>
    </interactant>
    <organismsDiffer>false</organismsDiffer>
    <experiments>3</experiments>
</comment>
<comment type="interaction">
    <interactant intactId="EBI-10172511">
        <id>Q9BYR5</id>
    </interactant>
    <interactant intactId="EBI-11958364">
        <id>Q9BYQ0</id>
        <label>KRTAP9-8</label>
    </interactant>
    <organismsDiffer>false</organismsDiffer>
    <experiments>3</experiments>
</comment>
<comment type="interaction">
    <interactant intactId="EBI-10172511">
        <id>Q9BYR5</id>
    </interactant>
    <interactant intactId="EBI-742828">
        <id>Q14847</id>
        <label>LASP1</label>
    </interactant>
    <organismsDiffer>false</organismsDiffer>
    <experiments>3</experiments>
</comment>
<comment type="interaction">
    <interactant intactId="EBI-10172511">
        <id>Q9BYR5</id>
    </interactant>
    <interactant intactId="EBI-11962058">
        <id>Q5T7P2</id>
        <label>LCE1A</label>
    </interactant>
    <organismsDiffer>false</organismsDiffer>
    <experiments>3</experiments>
</comment>
<comment type="interaction">
    <interactant intactId="EBI-10172511">
        <id>Q9BYR5</id>
    </interactant>
    <interactant intactId="EBI-10245913">
        <id>Q5T7P3</id>
        <label>LCE1B</label>
    </interactant>
    <organismsDiffer>false</organismsDiffer>
    <experiments>7</experiments>
</comment>
<comment type="interaction">
    <interactant intactId="EBI-10172511">
        <id>Q9BYR5</id>
    </interactant>
    <interactant intactId="EBI-12224199">
        <id>Q5T751</id>
        <label>LCE1C</label>
    </interactant>
    <organismsDiffer>false</organismsDiffer>
    <experiments>3</experiments>
</comment>
<comment type="interaction">
    <interactant intactId="EBI-10172511">
        <id>Q9BYR5</id>
    </interactant>
    <interactant intactId="EBI-11741311">
        <id>Q5T752</id>
        <label>LCE1D</label>
    </interactant>
    <organismsDiffer>false</organismsDiffer>
    <experiments>6</experiments>
</comment>
<comment type="interaction">
    <interactant intactId="EBI-10172511">
        <id>Q9BYR5</id>
    </interactant>
    <interactant intactId="EBI-11955335">
        <id>Q5T753</id>
        <label>LCE1E</label>
    </interactant>
    <organismsDiffer>false</organismsDiffer>
    <experiments>3</experiments>
</comment>
<comment type="interaction">
    <interactant intactId="EBI-10172511">
        <id>Q9BYR5</id>
    </interactant>
    <interactant intactId="EBI-10246607">
        <id>Q5TA79</id>
        <label>LCE2A</label>
    </interactant>
    <organismsDiffer>false</organismsDiffer>
    <experiments>6</experiments>
</comment>
<comment type="interaction">
    <interactant intactId="EBI-10172511">
        <id>Q9BYR5</id>
    </interactant>
    <interactant intactId="EBI-11478468">
        <id>O14633</id>
        <label>LCE2B</label>
    </interactant>
    <organismsDiffer>false</organismsDiffer>
    <experiments>5</experiments>
</comment>
<comment type="interaction">
    <interactant intactId="EBI-10172511">
        <id>Q9BYR5</id>
    </interactant>
    <interactant intactId="EBI-11973993">
        <id>Q5TA81</id>
        <label>LCE2C</label>
    </interactant>
    <organismsDiffer>false</organismsDiffer>
    <experiments>3</experiments>
</comment>
<comment type="interaction">
    <interactant intactId="EBI-10172511">
        <id>Q9BYR5</id>
    </interactant>
    <interactant intactId="EBI-10246750">
        <id>Q5TA82</id>
        <label>LCE2D</label>
    </interactant>
    <organismsDiffer>false</organismsDiffer>
    <experiments>6</experiments>
</comment>
<comment type="interaction">
    <interactant intactId="EBI-10172511">
        <id>Q9BYR5</id>
    </interactant>
    <interactant intactId="EBI-9394625">
        <id>Q5TA76</id>
        <label>LCE3A</label>
    </interactant>
    <organismsDiffer>false</organismsDiffer>
    <experiments>4</experiments>
</comment>
<comment type="interaction">
    <interactant intactId="EBI-10172511">
        <id>Q9BYR5</id>
    </interactant>
    <interactant intactId="EBI-11974495">
        <id>Q5TA77</id>
        <label>LCE3B</label>
    </interactant>
    <organismsDiffer>false</organismsDiffer>
    <experiments>3</experiments>
</comment>
<comment type="interaction">
    <interactant intactId="EBI-10172511">
        <id>Q9BYR5</id>
    </interactant>
    <interactant intactId="EBI-10245291">
        <id>Q5T5A8</id>
        <label>LCE3C</label>
    </interactant>
    <organismsDiffer>false</organismsDiffer>
    <experiments>6</experiments>
</comment>
<comment type="interaction">
    <interactant intactId="EBI-10172511">
        <id>Q9BYR5</id>
    </interactant>
    <interactant intactId="EBI-6658837">
        <id>Q9BYE3</id>
        <label>LCE3D</label>
    </interactant>
    <organismsDiffer>false</organismsDiffer>
    <experiments>3</experiments>
</comment>
<comment type="interaction">
    <interactant intactId="EBI-10172511">
        <id>Q9BYR5</id>
    </interactant>
    <interactant intactId="EBI-10245456">
        <id>Q5T5B0</id>
        <label>LCE3E</label>
    </interactant>
    <organismsDiffer>false</organismsDiffer>
    <experiments>6</experiments>
</comment>
<comment type="interaction">
    <interactant intactId="EBI-10172511">
        <id>Q9BYR5</id>
    </interactant>
    <interactant intactId="EBI-10246358">
        <id>Q5TA78</id>
        <label>LCE4A</label>
    </interactant>
    <organismsDiffer>false</organismsDiffer>
    <experiments>6</experiments>
</comment>
<comment type="interaction">
    <interactant intactId="EBI-10172511">
        <id>Q9BYR5</id>
    </interactant>
    <interactant intactId="EBI-11955689">
        <id>Q5TCM9</id>
        <label>LCE5A</label>
    </interactant>
    <organismsDiffer>false</organismsDiffer>
    <experiments>3</experiments>
</comment>
<comment type="interaction">
    <interactant intactId="EBI-10172511">
        <id>Q9BYR5</id>
    </interactant>
    <interactant intactId="EBI-739832">
        <id>Q8TBB1</id>
        <label>LNX1</label>
    </interactant>
    <organismsDiffer>false</organismsDiffer>
    <experiments>7</experiments>
</comment>
<comment type="interaction">
    <interactant intactId="EBI-10172511">
        <id>Q9BYR5</id>
    </interactant>
    <interactant intactId="EBI-3649340">
        <id>Q9Y5Q3</id>
        <label>MAFB</label>
    </interactant>
    <organismsDiffer>false</organismsDiffer>
    <experiments>3</experiments>
</comment>
<comment type="interaction">
    <interactant intactId="EBI-10172511">
        <id>Q9BYR5</id>
    </interactant>
    <interactant intactId="EBI-748397">
        <id>P50222</id>
        <label>MEOX2</label>
    </interactant>
    <organismsDiffer>false</organismsDiffer>
    <experiments>3</experiments>
</comment>
<comment type="interaction">
    <interactant intactId="EBI-10172511">
        <id>Q9BYR5</id>
    </interactant>
    <interactant intactId="EBI-16439278">
        <id>Q6FHY5</id>
        <label>MEOX2</label>
    </interactant>
    <organismsDiffer>false</organismsDiffer>
    <experiments>3</experiments>
</comment>
<comment type="interaction">
    <interactant intactId="EBI-10172511">
        <id>Q9BYR5</id>
    </interactant>
    <interactant intactId="EBI-2826725">
        <id>Q9NQS3</id>
        <label>NECTIN3</label>
    </interactant>
    <organismsDiffer>false</organismsDiffer>
    <experiments>3</experiments>
</comment>
<comment type="interaction">
    <interactant intactId="EBI-10172511">
        <id>Q9BYR5</id>
    </interactant>
    <interactant intactId="EBI-366978">
        <id>Q9UBE8</id>
        <label>NLK</label>
    </interactant>
    <organismsDiffer>false</organismsDiffer>
    <experiments>3</experiments>
</comment>
<comment type="interaction">
    <interactant intactId="EBI-10172511">
        <id>Q9BYR5</id>
    </interactant>
    <interactant intactId="EBI-945833">
        <id>Q7Z3S9</id>
        <label>NOTCH2NLA</label>
    </interactant>
    <organismsDiffer>false</organismsDiffer>
    <experiments>3</experiments>
</comment>
<comment type="interaction">
    <interactant intactId="EBI-10172511">
        <id>Q9BYR5</id>
    </interactant>
    <interactant intactId="EBI-22310682">
        <id>P0DPK4</id>
        <label>NOTCH2NLC</label>
    </interactant>
    <organismsDiffer>false</organismsDiffer>
    <experiments>3</experiments>
</comment>
<comment type="interaction">
    <interactant intactId="EBI-10172511">
        <id>Q9BYR5</id>
    </interactant>
    <interactant intactId="EBI-10250949">
        <id>Q6NSM0</id>
        <label>NR1D2</label>
    </interactant>
    <organismsDiffer>false</organismsDiffer>
    <experiments>7</experiments>
</comment>
<comment type="interaction">
    <interactant intactId="EBI-10172511">
        <id>Q9BYR5</id>
    </interactant>
    <interactant intactId="EBI-13644623">
        <id>Q92570</id>
        <label>NR4A3</label>
    </interactant>
    <organismsDiffer>false</organismsDiffer>
    <experiments>3</experiments>
</comment>
<comment type="interaction">
    <interactant intactId="EBI-10172511">
        <id>Q9BYR5</id>
    </interactant>
    <interactant intactId="EBI-741158">
        <id>Q96HA8</id>
        <label>NTAQ1</label>
    </interactant>
    <organismsDiffer>false</organismsDiffer>
    <experiments>3</experiments>
</comment>
<comment type="interaction">
    <interactant intactId="EBI-10172511">
        <id>Q9BYR5</id>
    </interactant>
    <interactant intactId="EBI-1210753">
        <id>Q7Z417</id>
        <label>NUFIP2</label>
    </interactant>
    <organismsDiffer>false</organismsDiffer>
    <experiments>6</experiments>
</comment>
<comment type="interaction">
    <interactant intactId="EBI-10172511">
        <id>Q9BYR5</id>
    </interactant>
    <interactant intactId="EBI-740446">
        <id>P32242</id>
        <label>OTX1</label>
    </interactant>
    <organismsDiffer>false</organismsDiffer>
    <experiments>3</experiments>
</comment>
<comment type="interaction">
    <interactant intactId="EBI-10172511">
        <id>Q9BYR5</id>
    </interactant>
    <interactant intactId="EBI-12813389">
        <id>Q8TDS5</id>
        <label>OXER1</label>
    </interactant>
    <organismsDiffer>false</organismsDiffer>
    <experiments>3</experiments>
</comment>
<comment type="interaction">
    <interactant intactId="EBI-10172511">
        <id>Q9BYR5</id>
    </interactant>
    <interactant intactId="EBI-742764">
        <id>O76083</id>
        <label>PDE9A</label>
    </interactant>
    <organismsDiffer>false</organismsDiffer>
    <experiments>3</experiments>
</comment>
<comment type="interaction">
    <interactant intactId="EBI-10172511">
        <id>Q9BYR5</id>
    </interactant>
    <interactant intactId="EBI-14084211">
        <id>A2BDE7</id>
        <label>PHLDA1</label>
    </interactant>
    <organismsDiffer>false</organismsDiffer>
    <experiments>3</experiments>
</comment>
<comment type="interaction">
    <interactant intactId="EBI-10172511">
        <id>Q9BYR5</id>
    </interactant>
    <interactant intactId="EBI-714158">
        <id>Q13526</id>
        <label>PIN1</label>
    </interactant>
    <organismsDiffer>false</organismsDiffer>
    <experiments>3</experiments>
</comment>
<comment type="interaction">
    <interactant intactId="EBI-10172511">
        <id>Q9BYR5</id>
    </interactant>
    <interactant intactId="EBI-740019">
        <id>O15162</id>
        <label>PLSCR1</label>
    </interactant>
    <organismsDiffer>false</organismsDiffer>
    <experiments>3</experiments>
</comment>
<comment type="interaction">
    <interactant intactId="EBI-10172511">
        <id>Q9BYR5</id>
    </interactant>
    <interactant intactId="EBI-769257">
        <id>Q9NRQ2</id>
        <label>PLSCR4</label>
    </interactant>
    <organismsDiffer>false</organismsDiffer>
    <experiments>3</experiments>
</comment>
<comment type="interaction">
    <interactant intactId="EBI-10172511">
        <id>Q9BYR5</id>
    </interactant>
    <interactant intactId="EBI-17236143">
        <id>Q12837</id>
        <label>POU4F2</label>
    </interactant>
    <organismsDiffer>false</organismsDiffer>
    <experiments>3</experiments>
</comment>
<comment type="interaction">
    <interactant intactId="EBI-10172511">
        <id>Q9BYR5</id>
    </interactant>
    <interactant intactId="EBI-1053424">
        <id>O43741</id>
        <label>PRKAB2</label>
    </interactant>
    <organismsDiffer>false</organismsDiffer>
    <experiments>3</experiments>
</comment>
<comment type="interaction">
    <interactant intactId="EBI-10172511">
        <id>Q9BYR5</id>
    </interactant>
    <interactant intactId="EBI-1181439">
        <id>P54619</id>
        <label>PRKAG1</label>
    </interactant>
    <organismsDiffer>false</organismsDiffer>
    <experiments>3</experiments>
</comment>
<comment type="interaction">
    <interactant intactId="EBI-10172511">
        <id>Q9BYR5</id>
    </interactant>
    <interactant intactId="EBI-357793">
        <id>P60900</id>
        <label>PSMA6</label>
    </interactant>
    <organismsDiffer>false</organismsDiffer>
    <experiments>3</experiments>
</comment>
<comment type="interaction">
    <interactant intactId="EBI-10172511">
        <id>Q9BYR5</id>
    </interactant>
    <interactant intactId="EBI-367390">
        <id>Q8WWW0</id>
        <label>RASSF5</label>
    </interactant>
    <organismsDiffer>false</organismsDiffer>
    <experiments>3</experiments>
</comment>
<comment type="interaction">
    <interactant intactId="EBI-10172511">
        <id>Q9BYR5</id>
    </interactant>
    <interactant intactId="EBI-1052678">
        <id>O76081</id>
        <label>RGS20</label>
    </interactant>
    <organismsDiffer>false</organismsDiffer>
    <experiments>3</experiments>
</comment>
<comment type="interaction">
    <interactant intactId="EBI-10172511">
        <id>Q9BYR5</id>
    </interactant>
    <interactant intactId="EBI-10178530">
        <id>O76081-6</id>
        <label>RGS20</label>
    </interactant>
    <organismsDiffer>false</organismsDiffer>
    <experiments>6</experiments>
</comment>
<comment type="interaction">
    <interactant intactId="EBI-10172511">
        <id>Q9BYR5</id>
    </interactant>
    <interactant intactId="EBI-10204280">
        <id>A0A0S2Z4U3</id>
        <label>SDC3</label>
    </interactant>
    <organismsDiffer>false</organismsDiffer>
    <experiments>3</experiments>
</comment>
<comment type="interaction">
    <interactant intactId="EBI-10172511">
        <id>Q9BYR5</id>
    </interactant>
    <interactant intactId="EBI-10313866">
        <id>Q9NUL5</id>
        <label>SHFL</label>
    </interactant>
    <organismsDiffer>false</organismsDiffer>
    <experiments>3</experiments>
</comment>
<comment type="interaction">
    <interactant intactId="EBI-10172511">
        <id>Q9BYR5</id>
    </interactant>
    <interactant intactId="EBI-1759386">
        <id>Q9UHI7</id>
        <label>SLC23A1</label>
    </interactant>
    <organismsDiffer>false</organismsDiffer>
    <experiments>3</experiments>
</comment>
<comment type="interaction">
    <interactant intactId="EBI-10172511">
        <id>Q9BYR5</id>
    </interactant>
    <interactant intactId="EBI-750394">
        <id>Q9UBX3</id>
        <label>SLC25A10</label>
    </interactant>
    <organismsDiffer>false</organismsDiffer>
    <experiments>3</experiments>
</comment>
<comment type="interaction">
    <interactant intactId="EBI-10172511">
        <id>Q9BYR5</id>
    </interactant>
    <interactant intactId="EBI-750494">
        <id>P49901</id>
        <label>SMCP</label>
    </interactant>
    <organismsDiffer>false</organismsDiffer>
    <experiments>3</experiments>
</comment>
<comment type="interaction">
    <interactant intactId="EBI-10172511">
        <id>Q9BYR5</id>
    </interactant>
    <interactant intactId="EBI-3916986">
        <id>Q86W54</id>
        <label>SPATA24</label>
    </interactant>
    <organismsDiffer>false</organismsDiffer>
    <experiments>3</experiments>
</comment>
<comment type="interaction">
    <interactant intactId="EBI-10172511">
        <id>Q9BYR5</id>
    </interactant>
    <interactant intactId="EBI-3866665">
        <id>O43609</id>
        <label>SPRY1</label>
    </interactant>
    <organismsDiffer>false</organismsDiffer>
    <experiments>3</experiments>
</comment>
<comment type="interaction">
    <interactant intactId="EBI-10172511">
        <id>Q9BYR5</id>
    </interactant>
    <interactant intactId="EBI-954696">
        <id>Q8N8B7</id>
        <label>TCEANC</label>
    </interactant>
    <organismsDiffer>false</organismsDiffer>
    <experiments>3</experiments>
</comment>
<comment type="interaction">
    <interactant intactId="EBI-10172511">
        <id>Q9BYR5</id>
    </interactant>
    <interactant intactId="EBI-10303636">
        <id>Q9GZM7-3</id>
        <label>TINAGL1</label>
    </interactant>
    <organismsDiffer>false</organismsDiffer>
    <experiments>3</experiments>
</comment>
<comment type="interaction">
    <interactant intactId="EBI-10172511">
        <id>Q9BYR5</id>
    </interactant>
    <interactant intactId="EBI-5235829">
        <id>Q8IWZ5</id>
        <label>TRIM42</label>
    </interactant>
    <organismsDiffer>false</organismsDiffer>
    <experiments>6</experiments>
</comment>
<comment type="interaction">
    <interactant intactId="EBI-10172511">
        <id>Q9BYR5</id>
    </interactant>
    <interactant intactId="EBI-2825190">
        <id>Q86UY0</id>
        <label>TXNDC5</label>
    </interactant>
    <organismsDiffer>false</organismsDiffer>
    <experiments>3</experiments>
</comment>
<comment type="interaction">
    <interactant intactId="EBI-10172511">
        <id>Q9BYR5</id>
    </interactant>
    <interactant intactId="EBI-3951628">
        <id>Q06418</id>
        <label>TYRO3</label>
    </interactant>
    <organismsDiffer>false</organismsDiffer>
    <experiments>3</experiments>
</comment>
<comment type="interaction">
    <interactant intactId="EBI-10172511">
        <id>Q9BYR5</id>
    </interactant>
    <interactant intactId="EBI-10249550">
        <id>Q6EMK4</id>
        <label>VASN</label>
    </interactant>
    <organismsDiffer>false</organismsDiffer>
    <experiments>3</experiments>
</comment>
<comment type="interaction">
    <interactant intactId="EBI-10172511">
        <id>Q9BYR5</id>
    </interactant>
    <interactant intactId="EBI-11957216">
        <id>A8MV65-2</id>
        <label>VGLL3</label>
    </interactant>
    <organismsDiffer>false</organismsDiffer>
    <experiments>3</experiments>
</comment>
<comment type="interaction">
    <interactant intactId="EBI-10172511">
        <id>Q9BYR5</id>
    </interactant>
    <interactant intactId="EBI-765538">
        <id>P25490</id>
        <label>YY1</label>
    </interactant>
    <organismsDiffer>false</organismsDiffer>
    <experiments>3</experiments>
</comment>
<comment type="interaction">
    <interactant intactId="EBI-10172511">
        <id>Q9BYR5</id>
    </interactant>
    <interactant intactId="EBI-744471">
        <id>O43167</id>
        <label>ZBTB24</label>
    </interactant>
    <organismsDiffer>false</organismsDiffer>
    <experiments>3</experiments>
</comment>
<comment type="interaction">
    <interactant intactId="EBI-10172511">
        <id>Q9BYR5</id>
    </interactant>
    <interactant intactId="EBI-2555767">
        <id>Q15973</id>
        <label>ZNF124</label>
    </interactant>
    <organismsDiffer>false</organismsDiffer>
    <experiments>3</experiments>
</comment>
<comment type="interaction">
    <interactant intactId="EBI-10172511">
        <id>Q9BYR5</id>
    </interactant>
    <interactant intactId="EBI-717634">
        <id>P17024</id>
        <label>ZNF20</label>
    </interactant>
    <organismsDiffer>false</organismsDiffer>
    <experiments>3</experiments>
</comment>
<comment type="interaction">
    <interactant intactId="EBI-10172511">
        <id>Q9BYR5</id>
    </interactant>
    <interactant intactId="EBI-740727">
        <id>Q8TAU3</id>
        <label>ZNF417</label>
    </interactant>
    <organismsDiffer>false</organismsDiffer>
    <experiments>3</experiments>
</comment>
<comment type="interaction">
    <interactant intactId="EBI-10172511">
        <id>Q9BYR5</id>
    </interactant>
    <interactant intactId="EBI-746605">
        <id>Q9BR84</id>
        <label>ZNF559</label>
    </interactant>
    <organismsDiffer>false</organismsDiffer>
    <experiments>3</experiments>
</comment>
<comment type="interaction">
    <interactant intactId="EBI-10172511">
        <id>Q9BYR5</id>
    </interactant>
    <interactant intactId="EBI-745520">
        <id>Q9P0T4</id>
        <label>ZNF581</label>
    </interactant>
    <organismsDiffer>false</organismsDiffer>
    <experiments>3</experiments>
</comment>
<comment type="interaction">
    <interactant intactId="EBI-10172511">
        <id>Q9BYR5</id>
    </interactant>
    <interactant intactId="EBI-16429014">
        <id>A0A0S2Z5X4</id>
        <label>ZNF688</label>
    </interactant>
    <organismsDiffer>false</organismsDiffer>
    <experiments>3</experiments>
</comment>
<comment type="interaction">
    <interactant intactId="EBI-10172511">
        <id>Q9BYR5</id>
    </interactant>
    <interactant intactId="EBI-10243533">
        <id>Q5BKY6</id>
    </interactant>
    <organismsDiffer>false</organismsDiffer>
    <experiments>3</experiments>
</comment>
<comment type="similarity">
    <text evidence="3">Belongs to the KRTAP type 4 family.</text>
</comment>
<proteinExistence type="evidence at protein level"/>
<protein>
    <recommendedName>
        <fullName>Keratin-associated protein 4-2</fullName>
    </recommendedName>
    <alternativeName>
        <fullName>Keratin-associated protein 4.2</fullName>
    </alternativeName>
    <alternativeName>
        <fullName>Ultrahigh sulfur keratin-associated protein 4.2</fullName>
    </alternativeName>
</protein>
<accession>Q9BYR5</accession>
<accession>A0JP64</accession>
<keyword id="KW-0416">Keratin</keyword>
<keyword id="KW-1267">Proteomics identification</keyword>
<keyword id="KW-1185">Reference proteome</keyword>
<keyword id="KW-0677">Repeat</keyword>